<sequence>MSGGLEILKLTEGDITKMLSANTHLGAENTNFQMEQYIYKRRSDGINIFNLRKTWEKLLLAARAIAAVEHAAEIFVISSRPFGQRAVLKFAAHTGATPIAGRFTPGAFTNQIQAAFREPRLLVVTDPAEDKQPITEASYVNIPVIAFCNTDSPLRYVDIAIPCNTKSAHSIGLMWWLLAREVLRLRGSIPRDGKWDVVVDLFFYRDPEEVEKEDQAAKEAAAAVPTPKQEPLEYGVTGASEWTEAITEQGGIQPSWADESLPGQPTVFPASNIDEWNTTAQPAAAVKPSEEWNAGRSGNWGTSATGNW</sequence>
<accession>A2I3Z2</accession>
<organism>
    <name type="scientific">Maconellicoccus hirsutus</name>
    <name type="common">Pink hibiscus mealybug</name>
    <dbReference type="NCBI Taxonomy" id="177089"/>
    <lineage>
        <taxon>Eukaryota</taxon>
        <taxon>Metazoa</taxon>
        <taxon>Ecdysozoa</taxon>
        <taxon>Arthropoda</taxon>
        <taxon>Hexapoda</taxon>
        <taxon>Insecta</taxon>
        <taxon>Pterygota</taxon>
        <taxon>Neoptera</taxon>
        <taxon>Paraneoptera</taxon>
        <taxon>Hemiptera</taxon>
        <taxon>Sternorrhyncha</taxon>
        <taxon>Coccoidea</taxon>
        <taxon>Pseudococcidae</taxon>
        <taxon>Maconellicoccus</taxon>
    </lineage>
</organism>
<name>RSSA_MACHI</name>
<keyword id="KW-0963">Cytoplasm</keyword>
<keyword id="KW-0687">Ribonucleoprotein</keyword>
<keyword id="KW-0689">Ribosomal protein</keyword>
<reference key="1">
    <citation type="submission" date="2006-10" db="EMBL/GenBank/DDBJ databases">
        <title>Ribosomal proteins of the pink hibiscus mealybug, Maconellicoccus hirsutus.</title>
        <authorList>
            <person name="Hunter W.B."/>
            <person name="Hunnicutt L.E."/>
        </authorList>
    </citation>
    <scope>NUCLEOTIDE SEQUENCE [MRNA]</scope>
</reference>
<dbReference type="EMBL" id="EF070495">
    <property type="protein sequence ID" value="ABM55561.1"/>
    <property type="molecule type" value="mRNA"/>
</dbReference>
<dbReference type="SMR" id="A2I3Z2"/>
<dbReference type="GO" id="GO:0022627">
    <property type="term" value="C:cytosolic small ribosomal subunit"/>
    <property type="evidence" value="ECO:0007669"/>
    <property type="project" value="UniProtKB-UniRule"/>
</dbReference>
<dbReference type="GO" id="GO:0003735">
    <property type="term" value="F:structural constituent of ribosome"/>
    <property type="evidence" value="ECO:0007669"/>
    <property type="project" value="UniProtKB-UniRule"/>
</dbReference>
<dbReference type="GO" id="GO:0000028">
    <property type="term" value="P:ribosomal small subunit assembly"/>
    <property type="evidence" value="ECO:0007669"/>
    <property type="project" value="UniProtKB-UniRule"/>
</dbReference>
<dbReference type="GO" id="GO:0006412">
    <property type="term" value="P:translation"/>
    <property type="evidence" value="ECO:0007669"/>
    <property type="project" value="UniProtKB-UniRule"/>
</dbReference>
<dbReference type="CDD" id="cd01425">
    <property type="entry name" value="RPS2"/>
    <property type="match status" value="1"/>
</dbReference>
<dbReference type="FunFam" id="3.40.50.10490:FF:000012">
    <property type="entry name" value="40S ribosomal protein SA"/>
    <property type="match status" value="1"/>
</dbReference>
<dbReference type="Gene3D" id="3.40.50.10490">
    <property type="entry name" value="Glucose-6-phosphate isomerase like protein, domain 1"/>
    <property type="match status" value="1"/>
</dbReference>
<dbReference type="HAMAP" id="MF_03015">
    <property type="entry name" value="Ribosomal_S2_euk"/>
    <property type="match status" value="1"/>
</dbReference>
<dbReference type="InterPro" id="IPR001865">
    <property type="entry name" value="Ribosomal_uS2"/>
</dbReference>
<dbReference type="InterPro" id="IPR032281">
    <property type="entry name" value="Ribosomal_uS2_C"/>
</dbReference>
<dbReference type="InterPro" id="IPR018130">
    <property type="entry name" value="Ribosomal_uS2_CS"/>
</dbReference>
<dbReference type="InterPro" id="IPR027498">
    <property type="entry name" value="Ribosomal_uS2_euk"/>
</dbReference>
<dbReference type="InterPro" id="IPR005707">
    <property type="entry name" value="Ribosomal_uS2_euk/arc"/>
</dbReference>
<dbReference type="InterPro" id="IPR023591">
    <property type="entry name" value="Ribosomal_uS2_flav_dom_sf"/>
</dbReference>
<dbReference type="NCBIfam" id="TIGR01012">
    <property type="entry name" value="uS2_euk_arch"/>
    <property type="match status" value="1"/>
</dbReference>
<dbReference type="PANTHER" id="PTHR11489">
    <property type="entry name" value="40S RIBOSOMAL PROTEIN SA"/>
    <property type="match status" value="1"/>
</dbReference>
<dbReference type="Pfam" id="PF16122">
    <property type="entry name" value="40S_SA_C"/>
    <property type="match status" value="1"/>
</dbReference>
<dbReference type="Pfam" id="PF00318">
    <property type="entry name" value="Ribosomal_S2"/>
    <property type="match status" value="2"/>
</dbReference>
<dbReference type="PRINTS" id="PR00395">
    <property type="entry name" value="RIBOSOMALS2"/>
</dbReference>
<dbReference type="SUPFAM" id="SSF52313">
    <property type="entry name" value="Ribosomal protein S2"/>
    <property type="match status" value="1"/>
</dbReference>
<dbReference type="PROSITE" id="PS00962">
    <property type="entry name" value="RIBOSOMAL_S2_1"/>
    <property type="match status" value="1"/>
</dbReference>
<dbReference type="PROSITE" id="PS00963">
    <property type="entry name" value="RIBOSOMAL_S2_2"/>
    <property type="match status" value="1"/>
</dbReference>
<proteinExistence type="evidence at transcript level"/>
<feature type="initiator methionine" description="Removed" evidence="1">
    <location>
        <position position="1"/>
    </location>
</feature>
<feature type="chain" id="PRO_0000371592" description="Small ribosomal subunit protein uS2">
    <location>
        <begin position="2"/>
        <end position="308"/>
    </location>
</feature>
<feature type="region of interest" description="Disordered" evidence="2">
    <location>
        <begin position="283"/>
        <end position="308"/>
    </location>
</feature>
<feature type="compositionally biased region" description="Polar residues" evidence="2">
    <location>
        <begin position="299"/>
        <end position="308"/>
    </location>
</feature>
<protein>
    <recommendedName>
        <fullName evidence="1">Small ribosomal subunit protein uS2</fullName>
    </recommendedName>
    <alternativeName>
        <fullName evidence="3">40S ribosomal protein SA</fullName>
    </alternativeName>
</protein>
<comment type="function">
    <text evidence="1">Required for the assembly and/or stability of the 40S ribosomal subunit. Required for the processing of the 20S rRNA-precursor to mature 18S rRNA in a late step of the maturation of 40S ribosomal subunits.</text>
</comment>
<comment type="subunit">
    <text evidence="1">Component of the small ribosomal subunit. Mature ribosomes consist of a small (40S) and a large (60S) subunit. The 40S subunit contains about 33 different proteins and 1 molecule of RNA (18S). The 60S subunit contains about 49 different proteins and 3 molecules of RNA (28S, 5.8S and 5S). Interacts with ribosomal protein S21.</text>
</comment>
<comment type="subcellular location">
    <subcellularLocation>
        <location evidence="1">Cytoplasm</location>
    </subcellularLocation>
</comment>
<comment type="similarity">
    <text evidence="1">Belongs to the universal ribosomal protein uS2 family.</text>
</comment>
<evidence type="ECO:0000255" key="1">
    <source>
        <dbReference type="HAMAP-Rule" id="MF_03015"/>
    </source>
</evidence>
<evidence type="ECO:0000256" key="2">
    <source>
        <dbReference type="SAM" id="MobiDB-lite"/>
    </source>
</evidence>
<evidence type="ECO:0000305" key="3"/>